<comment type="function">
    <molecule>Antimicrobial peptide 1a</molecule>
    <text evidence="1 3">Binds chitin (By similarity). Has antifungal activity against F.oxysporum 16/10 (IC(50)=4.1 uM) and B.sorokiniana 6/10 (IC(50)=2.7 uM) (PubMed:21434417). Inhibits germination of fungal spores (PubMed:21434417).</text>
</comment>
<comment type="PTM">
    <text evidence="3">Contains 5 disulfide bonds.</text>
</comment>
<comment type="mass spectrometry">
    <molecule>Antimicrobial peptide 1a</molecule>
    <text>Antimicrobial peptide 1a.</text>
</comment>
<protein>
    <recommendedName>
        <fullName evidence="4">Antimicrobial peptide 1b</fullName>
        <shortName evidence="4">LAMP-1b</shortName>
    </recommendedName>
    <component>
        <recommendedName>
            <fullName evidence="4">Antimicrobial peptide 1a</fullName>
            <shortName evidence="4">LAMP-1a</shortName>
        </recommendedName>
    </component>
</protein>
<sequence>AQKCGEQGRGAKCPNCLCCGRYGFCGSTPDYCGVGCQSQCRGCR</sequence>
<keyword id="KW-0929">Antimicrobial</keyword>
<keyword id="KW-0147">Chitin-binding</keyword>
<keyword id="KW-0903">Direct protein sequencing</keyword>
<keyword id="KW-1015">Disulfide bond</keyword>
<keyword id="KW-0295">Fungicide</keyword>
<keyword id="KW-0611">Plant defense</keyword>
<evidence type="ECO:0000250" key="1">
    <source>
        <dbReference type="UniProtKB" id="P85966"/>
    </source>
</evidence>
<evidence type="ECO:0000255" key="2">
    <source>
        <dbReference type="PROSITE-ProRule" id="PRU00261"/>
    </source>
</evidence>
<evidence type="ECO:0000269" key="3">
    <source>
    </source>
</evidence>
<evidence type="ECO:0000303" key="4">
    <source>
    </source>
</evidence>
<evidence type="ECO:0000305" key="5"/>
<accession>P86521</accession>
<organism evidence="4">
    <name type="scientific">Leymus arenarius</name>
    <name type="common">Lyme grass</name>
    <name type="synonym">Elymus arenarius</name>
    <dbReference type="NCBI Taxonomy" id="220462"/>
    <lineage>
        <taxon>Eukaryota</taxon>
        <taxon>Viridiplantae</taxon>
        <taxon>Streptophyta</taxon>
        <taxon>Embryophyta</taxon>
        <taxon>Tracheophyta</taxon>
        <taxon>Spermatophyta</taxon>
        <taxon>Magnoliopsida</taxon>
        <taxon>Liliopsida</taxon>
        <taxon>Poales</taxon>
        <taxon>Poaceae</taxon>
        <taxon>BOP clade</taxon>
        <taxon>Pooideae</taxon>
        <taxon>Triticodae</taxon>
        <taxon>Triticeae</taxon>
        <taxon>Hordeinae</taxon>
        <taxon>Leymus</taxon>
    </lineage>
</organism>
<proteinExistence type="evidence at protein level"/>
<reference evidence="5" key="1">
    <citation type="journal article" date="2010" name="Genetika">
        <title>[Heterologous expression of a synthetic gene encoding a novel hevein-type antimicrobial peptide of Leymus arenarius in Escherichia coli cells].</title>
        <authorList>
            <person name="Utkina L.L."/>
            <person name="Zhabon E.O."/>
            <person name="Slavokhotova A.A."/>
            <person name="Rogozhin E.A."/>
            <person name="Shiian A.N."/>
            <person name="Grishin E.V."/>
            <person name="Egorov T.A."/>
            <person name="Odintsova T.I."/>
            <person name="Pukhal'skii V.A."/>
        </authorList>
    </citation>
    <scope>PROTEIN SEQUENCE</scope>
    <scope>FUNCTION OF ANTIMICROBIAL PEPTIDE 1A</scope>
    <scope>MASS SPECTROMETRY</scope>
    <scope>PRESENCE OF DISULFIDE BONDS</scope>
    <source>
        <tissue evidence="4">Seed</tissue>
    </source>
</reference>
<dbReference type="SMR" id="P86521"/>
<dbReference type="GO" id="GO:0008061">
    <property type="term" value="F:chitin binding"/>
    <property type="evidence" value="ECO:0007669"/>
    <property type="project" value="UniProtKB-KW"/>
</dbReference>
<dbReference type="GO" id="GO:0050832">
    <property type="term" value="P:defense response to fungus"/>
    <property type="evidence" value="ECO:0007669"/>
    <property type="project" value="UniProtKB-KW"/>
</dbReference>
<dbReference type="GO" id="GO:0031640">
    <property type="term" value="P:killing of cells of another organism"/>
    <property type="evidence" value="ECO:0007669"/>
    <property type="project" value="UniProtKB-KW"/>
</dbReference>
<dbReference type="CDD" id="cd00035">
    <property type="entry name" value="ChtBD1"/>
    <property type="match status" value="1"/>
</dbReference>
<dbReference type="Gene3D" id="3.30.60.10">
    <property type="entry name" value="Endochitinase-like"/>
    <property type="match status" value="1"/>
</dbReference>
<dbReference type="InterPro" id="IPR001002">
    <property type="entry name" value="Chitin-bd_1"/>
</dbReference>
<dbReference type="InterPro" id="IPR036861">
    <property type="entry name" value="Endochitinase-like_sf"/>
</dbReference>
<dbReference type="Pfam" id="PF00187">
    <property type="entry name" value="Chitin_bind_1"/>
    <property type="match status" value="1"/>
</dbReference>
<dbReference type="PRINTS" id="PR00451">
    <property type="entry name" value="CHITINBINDNG"/>
</dbReference>
<dbReference type="SMART" id="SM00270">
    <property type="entry name" value="ChtBD1"/>
    <property type="match status" value="1"/>
</dbReference>
<dbReference type="SUPFAM" id="SSF57016">
    <property type="entry name" value="Plant lectins/antimicrobial peptides"/>
    <property type="match status" value="1"/>
</dbReference>
<dbReference type="PROSITE" id="PS50941">
    <property type="entry name" value="CHIT_BIND_I_2"/>
    <property type="match status" value="1"/>
</dbReference>
<feature type="peptide" id="PRO_0000445024" description="Antimicrobial peptide 1b" evidence="3">
    <location>
        <begin position="1"/>
        <end position="44"/>
    </location>
</feature>
<feature type="peptide" id="PRO_0000394409" description="Antimicrobial peptide 1a" evidence="3">
    <location>
        <begin position="1"/>
        <end position="43"/>
    </location>
</feature>
<feature type="domain" description="Chitin-binding type-1" evidence="2">
    <location>
        <begin position="1"/>
        <end position="42"/>
    </location>
</feature>
<feature type="disulfide bond" evidence="2">
    <location>
        <begin position="4"/>
        <end position="19"/>
    </location>
</feature>
<feature type="disulfide bond" evidence="2">
    <location>
        <begin position="13"/>
        <end position="25"/>
    </location>
</feature>
<feature type="disulfide bond" evidence="1">
    <location>
        <begin position="16"/>
        <end position="43"/>
    </location>
</feature>
<feature type="disulfide bond" evidence="2">
    <location>
        <begin position="18"/>
        <end position="32"/>
    </location>
</feature>
<feature type="disulfide bond" evidence="2">
    <location>
        <begin position="36"/>
        <end position="40"/>
    </location>
</feature>
<name>AMP_LYMAR</name>